<reference key="1">
    <citation type="journal article" date="1988" name="J. Bacteriol.">
        <title>Sequence and transcriptional start site of the Pseudomonas aeruginosa outer membrane porin protein F gene.</title>
        <authorList>
            <person name="Duchene M."/>
            <person name="Schweizer A."/>
            <person name="Lottspeich F."/>
            <person name="Krauss G."/>
            <person name="Marget M."/>
            <person name="Vogel K."/>
            <person name="von Specht B.-U."/>
            <person name="Domdey H."/>
        </authorList>
    </citation>
    <scope>NUCLEOTIDE SEQUENCE [GENOMIC DNA]</scope>
    <scope>PROTEIN SEQUENCE OF 25-37; 39-53; 79-84; 189-202; 253-259; 261-267; 297-301; 315-318; 325-334 AND 340-345</scope>
    <scope>SUBCELLULAR LOCATION</scope>
    <source>
        <strain>ATCC 33354</strain>
        <strain>ATCC 33359</strain>
    </source>
</reference>
<reference key="2">
    <citation type="journal article" date="2000" name="Nature">
        <title>Complete genome sequence of Pseudomonas aeruginosa PAO1, an opportunistic pathogen.</title>
        <authorList>
            <person name="Stover C.K."/>
            <person name="Pham X.-Q.T."/>
            <person name="Erwin A.L."/>
            <person name="Mizoguchi S.D."/>
            <person name="Warrener P."/>
            <person name="Hickey M.J."/>
            <person name="Brinkman F.S.L."/>
            <person name="Hufnagle W.O."/>
            <person name="Kowalik D.J."/>
            <person name="Lagrou M."/>
            <person name="Garber R.L."/>
            <person name="Goltry L."/>
            <person name="Tolentino E."/>
            <person name="Westbrock-Wadman S."/>
            <person name="Yuan Y."/>
            <person name="Brody L.L."/>
            <person name="Coulter S.N."/>
            <person name="Folger K.R."/>
            <person name="Kas A."/>
            <person name="Larbig K."/>
            <person name="Lim R.M."/>
            <person name="Smith K.A."/>
            <person name="Spencer D.H."/>
            <person name="Wong G.K.-S."/>
            <person name="Wu Z."/>
            <person name="Paulsen I.T."/>
            <person name="Reizer J."/>
            <person name="Saier M.H. Jr."/>
            <person name="Hancock R.E.W."/>
            <person name="Lory S."/>
            <person name="Olson M.V."/>
        </authorList>
    </citation>
    <scope>NUCLEOTIDE SEQUENCE [LARGE SCALE GENOMIC DNA]</scope>
    <source>
        <strain>ATCC 15692 / DSM 22644 / CIP 104116 / JCM 14847 / LMG 12228 / 1C / PRS 101 / PAO1</strain>
    </source>
</reference>
<reference key="3">
    <citation type="thesis" date="2005" institute="Ben-Gurion University" country="Israel">
        <title>Biofouling in water treatment systems: effect of membrane properties on biofilm formation.</title>
        <authorList>
            <person name="Liddor M."/>
        </authorList>
    </citation>
    <scope>PROTEIN SEQUENCE OF 145-154; 261-291; 302-335 AND 340-350</scope>
    <source>
        <strain>ATCC 33467 / type 1 smooth</strain>
        <strain>ATCC 33468 / type 2 mucoid</strain>
    </source>
</reference>
<reference evidence="8" key="4">
    <citation type="journal article" date="2015" name="J. Mol. Biol.">
        <title>Small-molecule transport by CarO, an abundant eight-stranded beta-barrel outer membrane protein from Acinetobacter baumannii.</title>
        <authorList>
            <person name="Zahn M."/>
            <person name="D'Agostino T."/>
            <person name="Eren E."/>
            <person name="Basle A."/>
            <person name="Ceccarelli M."/>
            <person name="van den Berg B."/>
        </authorList>
    </citation>
    <scope>X-RAY CRYSTALLOGRAPHY (1.60 ANGSTROMS) OF 25-184</scope>
    <scope>DOMAIN</scope>
</reference>
<reference evidence="9" key="5">
    <citation type="submission" date="2016-11" db="PDB data bank">
        <title>Crystal structure of the C-terminal peptidoglycan binding domain of OprF (PA1777) from Pseudomonas aeruginosa.</title>
        <authorList>
            <person name="Watanabe N."/>
        </authorList>
    </citation>
    <scope>X-RAY CRYSTALLOGRAPHY (1.50 ANGSTROMS) OF 231-350</scope>
</reference>
<dbReference type="EMBL" id="AF027290">
    <property type="protein sequence ID" value="AAD11568.1"/>
    <property type="molecule type" value="Genomic_DNA"/>
</dbReference>
<dbReference type="EMBL" id="M18975">
    <property type="protein sequence ID" value="AAA25973.1"/>
    <property type="molecule type" value="Genomic_DNA"/>
</dbReference>
<dbReference type="EMBL" id="AE004091">
    <property type="protein sequence ID" value="AAG05166.1"/>
    <property type="molecule type" value="Genomic_DNA"/>
</dbReference>
<dbReference type="PIR" id="S39156">
    <property type="entry name" value="S39156"/>
</dbReference>
<dbReference type="RefSeq" id="NP_250468.1">
    <property type="nucleotide sequence ID" value="NC_002516.2"/>
</dbReference>
<dbReference type="RefSeq" id="WP_003087843.1">
    <property type="nucleotide sequence ID" value="NZ_QZGE01000003.1"/>
</dbReference>
<dbReference type="PDB" id="4RLC">
    <property type="method" value="X-ray"/>
    <property type="resolution" value="1.60 A"/>
    <property type="chains" value="A=25-184"/>
</dbReference>
<dbReference type="PDB" id="5U1H">
    <property type="method" value="X-ray"/>
    <property type="resolution" value="1.50 A"/>
    <property type="chains" value="A/B/C/D=231-350"/>
</dbReference>
<dbReference type="PDBsum" id="4RLC"/>
<dbReference type="PDBsum" id="5U1H"/>
<dbReference type="SMR" id="P13794"/>
<dbReference type="FunCoup" id="P13794">
    <property type="interactions" value="186"/>
</dbReference>
<dbReference type="STRING" id="208964.PA1777"/>
<dbReference type="ChEMBL" id="CHEMBL4523189"/>
<dbReference type="TCDB" id="1.B.6.1.2">
    <property type="family name" value="the ompa-ompf porin (oop) family"/>
</dbReference>
<dbReference type="PaxDb" id="208964-PA1777"/>
<dbReference type="DNASU" id="878442"/>
<dbReference type="GeneID" id="77221639"/>
<dbReference type="GeneID" id="878442"/>
<dbReference type="KEGG" id="pae:PA1777"/>
<dbReference type="PATRIC" id="fig|208964.12.peg.1842"/>
<dbReference type="PseudoCAP" id="PA1777"/>
<dbReference type="HOGENOM" id="CLU_031536_2_0_6"/>
<dbReference type="InParanoid" id="P13794"/>
<dbReference type="OrthoDB" id="1149075at2"/>
<dbReference type="PhylomeDB" id="P13794"/>
<dbReference type="BioCyc" id="PAER208964:G1FZ6-1808-MONOMER"/>
<dbReference type="EvolutionaryTrace" id="P13794"/>
<dbReference type="Proteomes" id="UP000002438">
    <property type="component" value="Chromosome"/>
</dbReference>
<dbReference type="GO" id="GO:0009279">
    <property type="term" value="C:cell outer membrane"/>
    <property type="evidence" value="ECO:0007669"/>
    <property type="project" value="UniProtKB-SubCell"/>
</dbReference>
<dbReference type="GO" id="GO:0019867">
    <property type="term" value="C:outer membrane"/>
    <property type="evidence" value="ECO:0000304"/>
    <property type="project" value="PseudoCAP"/>
</dbReference>
<dbReference type="GO" id="GO:0046930">
    <property type="term" value="C:pore complex"/>
    <property type="evidence" value="ECO:0007669"/>
    <property type="project" value="UniProtKB-KW"/>
</dbReference>
<dbReference type="GO" id="GO:0005509">
    <property type="term" value="F:calcium ion binding"/>
    <property type="evidence" value="ECO:0007669"/>
    <property type="project" value="InterPro"/>
</dbReference>
<dbReference type="GO" id="GO:0001851">
    <property type="term" value="F:complement component C3b binding"/>
    <property type="evidence" value="ECO:0000353"/>
    <property type="project" value="PseudoCAP"/>
</dbReference>
<dbReference type="GO" id="GO:0015288">
    <property type="term" value="F:porin activity"/>
    <property type="evidence" value="ECO:0000304"/>
    <property type="project" value="PseudoCAP"/>
</dbReference>
<dbReference type="GO" id="GO:0044406">
    <property type="term" value="P:adhesion of symbiont to host"/>
    <property type="evidence" value="ECO:0000315"/>
    <property type="project" value="PseudoCAP"/>
</dbReference>
<dbReference type="GO" id="GO:0006811">
    <property type="term" value="P:monoatomic ion transport"/>
    <property type="evidence" value="ECO:0007669"/>
    <property type="project" value="UniProtKB-KW"/>
</dbReference>
<dbReference type="GO" id="GO:0008360">
    <property type="term" value="P:regulation of cell shape"/>
    <property type="evidence" value="ECO:0007669"/>
    <property type="project" value="UniProtKB-KW"/>
</dbReference>
<dbReference type="CDD" id="cd07185">
    <property type="entry name" value="OmpA_C-like"/>
    <property type="match status" value="1"/>
</dbReference>
<dbReference type="FunFam" id="3.30.1330.60:FF:000005">
    <property type="entry name" value="Outer membrane porin F"/>
    <property type="match status" value="1"/>
</dbReference>
<dbReference type="Gene3D" id="2.40.160.20">
    <property type="match status" value="1"/>
</dbReference>
<dbReference type="Gene3D" id="3.30.1330.60">
    <property type="entry name" value="OmpA-like domain"/>
    <property type="match status" value="1"/>
</dbReference>
<dbReference type="InterPro" id="IPR050330">
    <property type="entry name" value="Bact_OuterMem_StrucFunc"/>
</dbReference>
<dbReference type="InterPro" id="IPR011250">
    <property type="entry name" value="OMP/PagP_b-brl"/>
</dbReference>
<dbReference type="InterPro" id="IPR006664">
    <property type="entry name" value="OMP_bac"/>
</dbReference>
<dbReference type="InterPro" id="IPR006665">
    <property type="entry name" value="OmpA-like"/>
</dbReference>
<dbReference type="InterPro" id="IPR006690">
    <property type="entry name" value="OMPA-like_CS"/>
</dbReference>
<dbReference type="InterPro" id="IPR036737">
    <property type="entry name" value="OmpA-like_sf"/>
</dbReference>
<dbReference type="InterPro" id="IPR008722">
    <property type="entry name" value="OprF_membrane_N"/>
</dbReference>
<dbReference type="InterPro" id="IPR028974">
    <property type="entry name" value="TSP_type-3_rpt"/>
</dbReference>
<dbReference type="PANTHER" id="PTHR30329:SF21">
    <property type="entry name" value="LIPOPROTEIN YIAD-RELATED"/>
    <property type="match status" value="1"/>
</dbReference>
<dbReference type="PANTHER" id="PTHR30329">
    <property type="entry name" value="STATOR ELEMENT OF FLAGELLAR MOTOR COMPLEX"/>
    <property type="match status" value="1"/>
</dbReference>
<dbReference type="Pfam" id="PF00691">
    <property type="entry name" value="OmpA"/>
    <property type="match status" value="1"/>
</dbReference>
<dbReference type="Pfam" id="PF05736">
    <property type="entry name" value="OprF"/>
    <property type="match status" value="1"/>
</dbReference>
<dbReference type="PRINTS" id="PR01021">
    <property type="entry name" value="OMPADOMAIN"/>
</dbReference>
<dbReference type="SUPFAM" id="SSF56925">
    <property type="entry name" value="OMPA-like"/>
    <property type="match status" value="1"/>
</dbReference>
<dbReference type="SUPFAM" id="SSF103088">
    <property type="entry name" value="OmpA-like"/>
    <property type="match status" value="1"/>
</dbReference>
<dbReference type="SUPFAM" id="SSF103647">
    <property type="entry name" value="TSP type-3 repeat"/>
    <property type="match status" value="1"/>
</dbReference>
<dbReference type="PROSITE" id="PS01068">
    <property type="entry name" value="OMPA_1"/>
    <property type="match status" value="1"/>
</dbReference>
<dbReference type="PROSITE" id="PS51123">
    <property type="entry name" value="OMPA_2"/>
    <property type="match status" value="1"/>
</dbReference>
<protein>
    <recommendedName>
        <fullName>Outer membrane porin F</fullName>
    </recommendedName>
</protein>
<gene>
    <name type="primary">oprF</name>
    <name type="ordered locus">PA1777</name>
</gene>
<evidence type="ECO:0000250" key="1">
    <source>
        <dbReference type="UniProtKB" id="P0A910"/>
    </source>
</evidence>
<evidence type="ECO:0000255" key="2">
    <source>
        <dbReference type="PROSITE-ProRule" id="PRU00473"/>
    </source>
</evidence>
<evidence type="ECO:0000269" key="3">
    <source>
    </source>
</evidence>
<evidence type="ECO:0000269" key="4">
    <source>
    </source>
</evidence>
<evidence type="ECO:0000305" key="5"/>
<evidence type="ECO:0000305" key="6">
    <source>
    </source>
</evidence>
<evidence type="ECO:0000305" key="7">
    <source>
    </source>
</evidence>
<evidence type="ECO:0007744" key="8">
    <source>
        <dbReference type="PDB" id="4RLC"/>
    </source>
</evidence>
<evidence type="ECO:0007744" key="9">
    <source>
        <dbReference type="PDB" id="5U1H"/>
    </source>
</evidence>
<evidence type="ECO:0007829" key="10">
    <source>
        <dbReference type="PDB" id="4RLC"/>
    </source>
</evidence>
<evidence type="ECO:0007829" key="11">
    <source>
        <dbReference type="PDB" id="5U1H"/>
    </source>
</evidence>
<accession>P13794</accession>
<feature type="signal peptide" evidence="3">
    <location>
        <begin position="1"/>
        <end position="24"/>
    </location>
</feature>
<feature type="chain" id="PRO_0000020115" description="Outer membrane porin F">
    <location>
        <begin position="25"/>
        <end position="350"/>
    </location>
</feature>
<feature type="repeat" description="1">
    <location>
        <begin position="190"/>
        <end position="191"/>
    </location>
</feature>
<feature type="repeat" description="2">
    <location>
        <begin position="192"/>
        <end position="193"/>
    </location>
</feature>
<feature type="repeat" description="3">
    <location>
        <begin position="194"/>
        <end position="195"/>
    </location>
</feature>
<feature type="domain" description="OmpA-like" evidence="2">
    <location>
        <begin position="231"/>
        <end position="349"/>
    </location>
</feature>
<feature type="region of interest" description="3 X 2 AA tandem repeats of X-P">
    <location>
        <begin position="190"/>
        <end position="195"/>
    </location>
</feature>
<feature type="strand" evidence="10">
    <location>
        <begin position="30"/>
        <end position="39"/>
    </location>
</feature>
<feature type="strand" evidence="10">
    <location>
        <begin position="51"/>
        <end position="75"/>
    </location>
</feature>
<feature type="strand" evidence="10">
    <location>
        <begin position="89"/>
        <end position="100"/>
    </location>
</feature>
<feature type="strand" evidence="10">
    <location>
        <begin position="104"/>
        <end position="124"/>
    </location>
</feature>
<feature type="strand" evidence="10">
    <location>
        <begin position="129"/>
        <end position="162"/>
    </location>
</feature>
<feature type="strand" evidence="10">
    <location>
        <begin position="173"/>
        <end position="184"/>
    </location>
</feature>
<feature type="strand" evidence="11">
    <location>
        <begin position="231"/>
        <end position="243"/>
    </location>
</feature>
<feature type="helix" evidence="11">
    <location>
        <begin position="253"/>
        <end position="255"/>
    </location>
</feature>
<feature type="helix" evidence="11">
    <location>
        <begin position="256"/>
        <end position="268"/>
    </location>
</feature>
<feature type="strand" evidence="11">
    <location>
        <begin position="274"/>
        <end position="278"/>
    </location>
</feature>
<feature type="strand" evidence="11">
    <location>
        <begin position="282"/>
        <end position="284"/>
    </location>
</feature>
<feature type="helix" evidence="11">
    <location>
        <begin position="286"/>
        <end position="306"/>
    </location>
</feature>
<feature type="helix" evidence="11">
    <location>
        <begin position="312"/>
        <end position="314"/>
    </location>
</feature>
<feature type="strand" evidence="11">
    <location>
        <begin position="315"/>
        <end position="319"/>
    </location>
</feature>
<feature type="helix" evidence="11">
    <location>
        <begin position="332"/>
        <end position="338"/>
    </location>
</feature>
<feature type="strand" evidence="11">
    <location>
        <begin position="339"/>
        <end position="348"/>
    </location>
</feature>
<comment type="function">
    <text evidence="1">Has porin activity, forming small water-filled channels. Also has a structural role in determining cell shape and ability to grow in low-osmolarity medium.</text>
</comment>
<comment type="subcellular location">
    <subcellularLocation>
        <location evidence="3">Cell outer membrane</location>
        <topology evidence="7">Multi-pass membrane protein</topology>
    </subcellularLocation>
</comment>
<comment type="domain">
    <text evidence="4">The N-terminal beta-barrel domain (residues 25-184) when reconstituted into lipid vesicles is blocked at both ends.</text>
</comment>
<comment type="PTM">
    <text evidence="6">Might contain two disulfide bonds.</text>
</comment>
<comment type="similarity">
    <text evidence="5">Belongs to the outer membrane OOP (TC 1.B.6) superfamily.</text>
</comment>
<organism>
    <name type="scientific">Pseudomonas aeruginosa (strain ATCC 15692 / DSM 22644 / CIP 104116 / JCM 14847 / LMG 12228 / 1C / PRS 101 / PAO1)</name>
    <dbReference type="NCBI Taxonomy" id="208964"/>
    <lineage>
        <taxon>Bacteria</taxon>
        <taxon>Pseudomonadati</taxon>
        <taxon>Pseudomonadota</taxon>
        <taxon>Gammaproteobacteria</taxon>
        <taxon>Pseudomonadales</taxon>
        <taxon>Pseudomonadaceae</taxon>
        <taxon>Pseudomonas</taxon>
    </lineage>
</organism>
<sequence length="350" mass="37640">MKLKNTLGVVIGSLVAASAMNAFAQGQNSVEIEAFGKRYFTDSVRNMKNADLYGGSIGYFLTDDVELALSYGEYHDVRGTYETGNKKVHGNLTSLDAIYHFGTPGVGLRPYVSAGLAHQNITNINSDSQGRQQMTMANIGAGLKYYFTENFFAKASLDGQYGLEKRDNGHQGEWMAGLGVGFNFGGSKAAPAPEPVADVCSDSDNDGVCDNVDKCPDTPANVTVDANGCPAVAEVVRVQLDVKFDFDKSKVKENSYADIKNLADFMKQYPSTSTTVEGHTDSVGTDAYNQKLSERRANAVRDVLVNEYGVEGGRVNAVGYGESRPVADNATAEGRAINRRVEAEVEAEAK</sequence>
<proteinExistence type="evidence at protein level"/>
<name>PORF_PSEAE</name>
<keyword id="KW-0002">3D-structure</keyword>
<keyword id="KW-0998">Cell outer membrane</keyword>
<keyword id="KW-0133">Cell shape</keyword>
<keyword id="KW-0903">Direct protein sequencing</keyword>
<keyword id="KW-1015">Disulfide bond</keyword>
<keyword id="KW-0406">Ion transport</keyword>
<keyword id="KW-0472">Membrane</keyword>
<keyword id="KW-0626">Porin</keyword>
<keyword id="KW-1185">Reference proteome</keyword>
<keyword id="KW-0677">Repeat</keyword>
<keyword id="KW-0732">Signal</keyword>
<keyword id="KW-0812">Transmembrane</keyword>
<keyword id="KW-1134">Transmembrane beta strand</keyword>
<keyword id="KW-0813">Transport</keyword>